<proteinExistence type="inferred from homology"/>
<keyword id="KW-0325">Glycoprotein</keyword>
<keyword id="KW-0333">Golgi apparatus</keyword>
<keyword id="KW-0472">Membrane</keyword>
<keyword id="KW-1185">Reference proteome</keyword>
<keyword id="KW-0812">Transmembrane</keyword>
<keyword id="KW-1133">Transmembrane helix</keyword>
<feature type="chain" id="PRO_0000343010" description="Golgi apparatus membrane protein tvp18">
    <location>
        <begin position="1"/>
        <end position="151"/>
    </location>
</feature>
<feature type="transmembrane region" description="Helical" evidence="2">
    <location>
        <begin position="21"/>
        <end position="41"/>
    </location>
</feature>
<feature type="transmembrane region" description="Helical" evidence="2">
    <location>
        <begin position="43"/>
        <end position="63"/>
    </location>
</feature>
<feature type="transmembrane region" description="Helical" evidence="2">
    <location>
        <begin position="88"/>
        <end position="108"/>
    </location>
</feature>
<feature type="transmembrane region" description="Helical" evidence="2">
    <location>
        <begin position="110"/>
        <end position="130"/>
    </location>
</feature>
<feature type="glycosylation site" description="N-linked (GlcNAc...) asparagine" evidence="2">
    <location>
        <position position="11"/>
    </location>
</feature>
<dbReference type="EMBL" id="DS027056">
    <property type="protein sequence ID" value="EAW09638.1"/>
    <property type="molecule type" value="Genomic_DNA"/>
</dbReference>
<dbReference type="RefSeq" id="XP_001271064.1">
    <property type="nucleotide sequence ID" value="XM_001271063.1"/>
</dbReference>
<dbReference type="STRING" id="344612.A1CKG4"/>
<dbReference type="GlyCosmos" id="A1CKG4">
    <property type="glycosylation" value="1 site, No reported glycans"/>
</dbReference>
<dbReference type="EnsemblFungi" id="EAW09638">
    <property type="protein sequence ID" value="EAW09638"/>
    <property type="gene ID" value="ACLA_038490"/>
</dbReference>
<dbReference type="GeneID" id="4703371"/>
<dbReference type="KEGG" id="act:ACLA_038490"/>
<dbReference type="VEuPathDB" id="FungiDB:ACLA_038490"/>
<dbReference type="eggNOG" id="ENOG502S3AC">
    <property type="taxonomic scope" value="Eukaryota"/>
</dbReference>
<dbReference type="HOGENOM" id="CLU_118698_0_0_1"/>
<dbReference type="OMA" id="IYAQWLG"/>
<dbReference type="OrthoDB" id="5591789at2759"/>
<dbReference type="Proteomes" id="UP000006701">
    <property type="component" value="Unassembled WGS sequence"/>
</dbReference>
<dbReference type="GO" id="GO:0000139">
    <property type="term" value="C:Golgi membrane"/>
    <property type="evidence" value="ECO:0007669"/>
    <property type="project" value="UniProtKB-SubCell"/>
</dbReference>
<dbReference type="GO" id="GO:0016192">
    <property type="term" value="P:vesicle-mediated transport"/>
    <property type="evidence" value="ECO:0007669"/>
    <property type="project" value="TreeGrafter"/>
</dbReference>
<dbReference type="InterPro" id="IPR019365">
    <property type="entry name" value="TVP18/Ca-channel_flower"/>
</dbReference>
<dbReference type="PANTHER" id="PTHR13314">
    <property type="entry name" value="CALCIUM CHANNEL FLOWER HOMOLOG"/>
    <property type="match status" value="1"/>
</dbReference>
<dbReference type="PANTHER" id="PTHR13314:SF2">
    <property type="entry name" value="CALCIUM CHANNEL FLOWER HOMOLOG"/>
    <property type="match status" value="1"/>
</dbReference>
<dbReference type="Pfam" id="PF10233">
    <property type="entry name" value="Cg6151-P"/>
    <property type="match status" value="1"/>
</dbReference>
<dbReference type="SMART" id="SM01077">
    <property type="entry name" value="Cg6151-P"/>
    <property type="match status" value="1"/>
</dbReference>
<evidence type="ECO:0000250" key="1"/>
<evidence type="ECO:0000255" key="2"/>
<evidence type="ECO:0000305" key="3"/>
<accession>A1CKG4</accession>
<reference key="1">
    <citation type="journal article" date="2008" name="PLoS Genet.">
        <title>Genomic islands in the pathogenic filamentous fungus Aspergillus fumigatus.</title>
        <authorList>
            <person name="Fedorova N.D."/>
            <person name="Khaldi N."/>
            <person name="Joardar V.S."/>
            <person name="Maiti R."/>
            <person name="Amedeo P."/>
            <person name="Anderson M.J."/>
            <person name="Crabtree J."/>
            <person name="Silva J.C."/>
            <person name="Badger J.H."/>
            <person name="Albarraq A."/>
            <person name="Angiuoli S."/>
            <person name="Bussey H."/>
            <person name="Bowyer P."/>
            <person name="Cotty P.J."/>
            <person name="Dyer P.S."/>
            <person name="Egan A."/>
            <person name="Galens K."/>
            <person name="Fraser-Liggett C.M."/>
            <person name="Haas B.J."/>
            <person name="Inman J.M."/>
            <person name="Kent R."/>
            <person name="Lemieux S."/>
            <person name="Malavazi I."/>
            <person name="Orvis J."/>
            <person name="Roemer T."/>
            <person name="Ronning C.M."/>
            <person name="Sundaram J.P."/>
            <person name="Sutton G."/>
            <person name="Turner G."/>
            <person name="Venter J.C."/>
            <person name="White O.R."/>
            <person name="Whitty B.R."/>
            <person name="Youngman P."/>
            <person name="Wolfe K.H."/>
            <person name="Goldman G.H."/>
            <person name="Wortman J.R."/>
            <person name="Jiang B."/>
            <person name="Denning D.W."/>
            <person name="Nierman W.C."/>
        </authorList>
    </citation>
    <scope>NUCLEOTIDE SEQUENCE [LARGE SCALE GENOMIC DNA]</scope>
    <source>
        <strain>ATCC 1007 / CBS 513.65 / DSM 816 / NCTC 3887 / NRRL 1 / QM 1276 / 107</strain>
    </source>
</reference>
<protein>
    <recommendedName>
        <fullName>Golgi apparatus membrane protein tvp18</fullName>
    </recommendedName>
</protein>
<organism>
    <name type="scientific">Aspergillus clavatus (strain ATCC 1007 / CBS 513.65 / DSM 816 / NCTC 3887 / NRRL 1 / QM 1276 / 107)</name>
    <dbReference type="NCBI Taxonomy" id="344612"/>
    <lineage>
        <taxon>Eukaryota</taxon>
        <taxon>Fungi</taxon>
        <taxon>Dikarya</taxon>
        <taxon>Ascomycota</taxon>
        <taxon>Pezizomycotina</taxon>
        <taxon>Eurotiomycetes</taxon>
        <taxon>Eurotiomycetidae</taxon>
        <taxon>Eurotiales</taxon>
        <taxon>Aspergillaceae</taxon>
        <taxon>Aspergillus</taxon>
        <taxon>Aspergillus subgen. Fumigati</taxon>
    </lineage>
</organism>
<sequence length="151" mass="16645">MTLAEEFRSRNFSIYGQWTGVLCIILCIALGIANIFTIHVLRIVFSVLCLVSGLVLIFIEVPWLLRICPTSSKFDAFIRRFTTNYMRAVMYAIMSTIQWLSLLPGSGASSLIVAAVFLLIAGLFYALAGLKNQEFVGSKTLGGQGLVQMIV</sequence>
<comment type="function">
    <text evidence="1">Golgi membrane protein involved in vesicular trafficking.</text>
</comment>
<comment type="subcellular location">
    <subcellularLocation>
        <location evidence="1">Golgi apparatus membrane</location>
        <topology evidence="1">Multi-pass membrane protein</topology>
    </subcellularLocation>
</comment>
<comment type="similarity">
    <text evidence="3">Belongs to the TVP18 family.</text>
</comment>
<gene>
    <name type="primary">tvp18</name>
    <name type="ORF">ACLA_038490</name>
</gene>
<name>TVP18_ASPCL</name>